<proteinExistence type="inferred from homology"/>
<dbReference type="EC" id="2.9.1.3" evidence="1"/>
<dbReference type="EMBL" id="AM286690">
    <property type="protein sequence ID" value="CAL17168.1"/>
    <property type="molecule type" value="Genomic_DNA"/>
</dbReference>
<dbReference type="SMR" id="Q0VNT0"/>
<dbReference type="STRING" id="393595.ABO_1720"/>
<dbReference type="KEGG" id="abo:ABO_1720"/>
<dbReference type="eggNOG" id="COG2603">
    <property type="taxonomic scope" value="Bacteria"/>
</dbReference>
<dbReference type="HOGENOM" id="CLU_043456_1_0_6"/>
<dbReference type="OrthoDB" id="9808735at2"/>
<dbReference type="Proteomes" id="UP000008871">
    <property type="component" value="Chromosome"/>
</dbReference>
<dbReference type="GO" id="GO:0016765">
    <property type="term" value="F:transferase activity, transferring alkyl or aryl (other than methyl) groups"/>
    <property type="evidence" value="ECO:0007669"/>
    <property type="project" value="UniProtKB-UniRule"/>
</dbReference>
<dbReference type="GO" id="GO:0043828">
    <property type="term" value="F:tRNA 2-selenouridine synthase activity"/>
    <property type="evidence" value="ECO:0007669"/>
    <property type="project" value="UniProtKB-EC"/>
</dbReference>
<dbReference type="GO" id="GO:0002098">
    <property type="term" value="P:tRNA wobble uridine modification"/>
    <property type="evidence" value="ECO:0007669"/>
    <property type="project" value="UniProtKB-UniRule"/>
</dbReference>
<dbReference type="Gene3D" id="3.40.250.10">
    <property type="entry name" value="Rhodanese-like domain"/>
    <property type="match status" value="1"/>
</dbReference>
<dbReference type="HAMAP" id="MF_01622">
    <property type="entry name" value="tRNA_sel_U_synth"/>
    <property type="match status" value="1"/>
</dbReference>
<dbReference type="InterPro" id="IPR001763">
    <property type="entry name" value="Rhodanese-like_dom"/>
</dbReference>
<dbReference type="InterPro" id="IPR036873">
    <property type="entry name" value="Rhodanese-like_dom_sf"/>
</dbReference>
<dbReference type="InterPro" id="IPR017582">
    <property type="entry name" value="SelU"/>
</dbReference>
<dbReference type="NCBIfam" id="NF008751">
    <property type="entry name" value="PRK11784.1-3"/>
    <property type="match status" value="1"/>
</dbReference>
<dbReference type="NCBIfam" id="TIGR03167">
    <property type="entry name" value="tRNA_sel_U_synt"/>
    <property type="match status" value="1"/>
</dbReference>
<dbReference type="PANTHER" id="PTHR30401">
    <property type="entry name" value="TRNA 2-SELENOURIDINE SYNTHASE"/>
    <property type="match status" value="1"/>
</dbReference>
<dbReference type="PANTHER" id="PTHR30401:SF0">
    <property type="entry name" value="TRNA 2-SELENOURIDINE SYNTHASE"/>
    <property type="match status" value="1"/>
</dbReference>
<dbReference type="SMART" id="SM00450">
    <property type="entry name" value="RHOD"/>
    <property type="match status" value="1"/>
</dbReference>
<dbReference type="SUPFAM" id="SSF52821">
    <property type="entry name" value="Rhodanese/Cell cycle control phosphatase"/>
    <property type="match status" value="1"/>
</dbReference>
<dbReference type="PROSITE" id="PS50206">
    <property type="entry name" value="RHODANESE_3"/>
    <property type="match status" value="1"/>
</dbReference>
<feature type="chain" id="PRO_0000292695" description="tRNA 2-selenouridine synthase">
    <location>
        <begin position="1"/>
        <end position="362"/>
    </location>
</feature>
<feature type="domain" description="Rhodanese" evidence="1">
    <location>
        <begin position="12"/>
        <end position="135"/>
    </location>
</feature>
<feature type="active site" description="S-selanylcysteine intermediate" evidence="1">
    <location>
        <position position="95"/>
    </location>
</feature>
<protein>
    <recommendedName>
        <fullName evidence="1">tRNA 2-selenouridine synthase</fullName>
        <ecNumber evidence="1">2.9.1.3</ecNumber>
    </recommendedName>
</protein>
<accession>Q0VNT0</accession>
<organism>
    <name type="scientific">Alcanivorax borkumensis (strain ATCC 700651 / DSM 11573 / NCIMB 13689 / SK2)</name>
    <dbReference type="NCBI Taxonomy" id="393595"/>
    <lineage>
        <taxon>Bacteria</taxon>
        <taxon>Pseudomonadati</taxon>
        <taxon>Pseudomonadota</taxon>
        <taxon>Gammaproteobacteria</taxon>
        <taxon>Oceanospirillales</taxon>
        <taxon>Alcanivoracaceae</taxon>
        <taxon>Alcanivorax</taxon>
    </lineage>
</organism>
<keyword id="KW-1185">Reference proteome</keyword>
<keyword id="KW-0711">Selenium</keyword>
<keyword id="KW-0808">Transferase</keyword>
<evidence type="ECO:0000255" key="1">
    <source>
        <dbReference type="HAMAP-Rule" id="MF_01622"/>
    </source>
</evidence>
<sequence length="362" mass="41146">MRDDTCDYLSLFLNDTPLLDVRAPVEFAKGAFPGTTNLALINDEERHRIGICYKQHGQQAAIDLGNTLVCGEERERRLYAWQQWWQANPNGYLYCFRGGLRSQTTQAWLREIGIDAPLVTGGYKALRRFLIDEMEACIANLPLEVLCGRTGCAKTRVIEQQPNAIDLEGLAHHRGSSFGRRPGGQPSQIDFENSLSIALIKQRAAQPVSILVEDESKLIGRCHLPFSLQDQIKSQPRIIIEESLESRVQVTLEDYVIGPLQEYARYFGEHDALKQLGDELLASMDRIRRRLGGIRHQQLRQQLQEALAVQANCGNTELHREWIHSLLADYYDPMYDYMLSRRAGTILFQGSRAEVSAFLNSR</sequence>
<comment type="function">
    <text evidence="1">Involved in the post-transcriptional modification of the uridine at the wobble position (U34) of tRNA(Lys), tRNA(Glu) and tRNA(Gln). Catalyzes the conversion of 2-thiouridine (S2U-RNA) to 2-selenouridine (Se2U-RNA). Acts in a two-step process involving geranylation of 2-thiouridine (S2U) to S-geranyl-2-thiouridine (geS2U) and subsequent selenation of the latter derivative to 2-selenouridine (Se2U) in the tRNA chain.</text>
</comment>
<comment type="catalytic activity">
    <reaction evidence="1">
        <text>5-methylaminomethyl-2-thiouridine(34) in tRNA + selenophosphate + (2E)-geranyl diphosphate + H2O + H(+) = 5-methylaminomethyl-2-selenouridine(34) in tRNA + (2E)-thiogeraniol + phosphate + diphosphate</text>
        <dbReference type="Rhea" id="RHEA:42716"/>
        <dbReference type="Rhea" id="RHEA-COMP:10195"/>
        <dbReference type="Rhea" id="RHEA-COMP:10196"/>
        <dbReference type="ChEBI" id="CHEBI:15377"/>
        <dbReference type="ChEBI" id="CHEBI:15378"/>
        <dbReference type="ChEBI" id="CHEBI:16144"/>
        <dbReference type="ChEBI" id="CHEBI:33019"/>
        <dbReference type="ChEBI" id="CHEBI:43474"/>
        <dbReference type="ChEBI" id="CHEBI:58057"/>
        <dbReference type="ChEBI" id="CHEBI:74455"/>
        <dbReference type="ChEBI" id="CHEBI:82743"/>
        <dbReference type="ChEBI" id="CHEBI:143703"/>
        <dbReference type="EC" id="2.9.1.3"/>
    </reaction>
    <physiologicalReaction direction="left-to-right" evidence="1">
        <dbReference type="Rhea" id="RHEA:42717"/>
    </physiologicalReaction>
</comment>
<comment type="catalytic activity">
    <reaction evidence="1">
        <text>5-methylaminomethyl-2-thiouridine(34) in tRNA + (2E)-geranyl diphosphate = 5-methylaminomethyl-S-(2E)-geranyl-thiouridine(34) in tRNA + diphosphate</text>
        <dbReference type="Rhea" id="RHEA:14085"/>
        <dbReference type="Rhea" id="RHEA-COMP:10195"/>
        <dbReference type="Rhea" id="RHEA-COMP:14654"/>
        <dbReference type="ChEBI" id="CHEBI:33019"/>
        <dbReference type="ChEBI" id="CHEBI:58057"/>
        <dbReference type="ChEBI" id="CHEBI:74455"/>
        <dbReference type="ChEBI" id="CHEBI:140632"/>
    </reaction>
    <physiologicalReaction direction="left-to-right" evidence="1">
        <dbReference type="Rhea" id="RHEA:14086"/>
    </physiologicalReaction>
</comment>
<comment type="catalytic activity">
    <reaction evidence="1">
        <text>5-methylaminomethyl-S-(2E)-geranyl-thiouridine(34) in tRNA + selenophosphate + H(+) = 5-methylaminomethyl-2-(Se-phospho)selenouridine(34) in tRNA + (2E)-thiogeraniol</text>
        <dbReference type="Rhea" id="RHEA:60172"/>
        <dbReference type="Rhea" id="RHEA-COMP:14654"/>
        <dbReference type="Rhea" id="RHEA-COMP:15523"/>
        <dbReference type="ChEBI" id="CHEBI:15378"/>
        <dbReference type="ChEBI" id="CHEBI:16144"/>
        <dbReference type="ChEBI" id="CHEBI:140632"/>
        <dbReference type="ChEBI" id="CHEBI:143702"/>
        <dbReference type="ChEBI" id="CHEBI:143703"/>
    </reaction>
    <physiologicalReaction direction="left-to-right" evidence="1">
        <dbReference type="Rhea" id="RHEA:60173"/>
    </physiologicalReaction>
</comment>
<comment type="catalytic activity">
    <reaction evidence="1">
        <text>5-methylaminomethyl-2-(Se-phospho)selenouridine(34) in tRNA + H2O = 5-methylaminomethyl-2-selenouridine(34) in tRNA + phosphate</text>
        <dbReference type="Rhea" id="RHEA:60176"/>
        <dbReference type="Rhea" id="RHEA-COMP:10196"/>
        <dbReference type="Rhea" id="RHEA-COMP:15523"/>
        <dbReference type="ChEBI" id="CHEBI:15377"/>
        <dbReference type="ChEBI" id="CHEBI:43474"/>
        <dbReference type="ChEBI" id="CHEBI:82743"/>
        <dbReference type="ChEBI" id="CHEBI:143702"/>
    </reaction>
    <physiologicalReaction direction="left-to-right" evidence="1">
        <dbReference type="Rhea" id="RHEA:60177"/>
    </physiologicalReaction>
</comment>
<comment type="subunit">
    <text evidence="1">Monomer.</text>
</comment>
<comment type="similarity">
    <text evidence="1">Belongs to the SelU family.</text>
</comment>
<gene>
    <name evidence="1" type="primary">selU</name>
    <name type="ordered locus">ABO_1720</name>
</gene>
<name>SELU_ALCBS</name>
<reference key="1">
    <citation type="journal article" date="2006" name="Nat. Biotechnol.">
        <title>Genome sequence of the ubiquitous hydrocarbon-degrading marine bacterium Alcanivorax borkumensis.</title>
        <authorList>
            <person name="Schneiker S."/>
            <person name="Martins dos Santos V.A.P."/>
            <person name="Bartels D."/>
            <person name="Bekel T."/>
            <person name="Brecht M."/>
            <person name="Buhrmester J."/>
            <person name="Chernikova T.N."/>
            <person name="Denaro R."/>
            <person name="Ferrer M."/>
            <person name="Gertler C."/>
            <person name="Goesmann A."/>
            <person name="Golyshina O.V."/>
            <person name="Kaminski F."/>
            <person name="Khachane A.N."/>
            <person name="Lang S."/>
            <person name="Linke B."/>
            <person name="McHardy A.C."/>
            <person name="Meyer F."/>
            <person name="Nechitaylo T."/>
            <person name="Puehler A."/>
            <person name="Regenhardt D."/>
            <person name="Rupp O."/>
            <person name="Sabirova J.S."/>
            <person name="Selbitschka W."/>
            <person name="Yakimov M.M."/>
            <person name="Timmis K.N."/>
            <person name="Vorhoelter F.-J."/>
            <person name="Weidner S."/>
            <person name="Kaiser O."/>
            <person name="Golyshin P.N."/>
        </authorList>
    </citation>
    <scope>NUCLEOTIDE SEQUENCE [LARGE SCALE GENOMIC DNA]</scope>
    <source>
        <strain>ATCC 700651 / DSM 11573 / NCIMB 13689 / SK2</strain>
    </source>
</reference>